<evidence type="ECO:0000255" key="1">
    <source>
        <dbReference type="HAMAP-Rule" id="MF_00211"/>
    </source>
</evidence>
<dbReference type="EC" id="2.4.2.18" evidence="1"/>
<dbReference type="EMBL" id="AE016795">
    <property type="protein sequence ID" value="AAO11390.1"/>
    <property type="molecule type" value="Genomic_DNA"/>
</dbReference>
<dbReference type="RefSeq" id="WP_011080869.1">
    <property type="nucleotide sequence ID" value="NC_004459.3"/>
</dbReference>
<dbReference type="SMR" id="Q8D8B4"/>
<dbReference type="KEGG" id="vvu:VV1_3066"/>
<dbReference type="HOGENOM" id="CLU_034315_2_1_6"/>
<dbReference type="UniPathway" id="UPA00035">
    <property type="reaction ID" value="UER00041"/>
</dbReference>
<dbReference type="Proteomes" id="UP000002275">
    <property type="component" value="Chromosome 1"/>
</dbReference>
<dbReference type="GO" id="GO:0005829">
    <property type="term" value="C:cytosol"/>
    <property type="evidence" value="ECO:0007669"/>
    <property type="project" value="TreeGrafter"/>
</dbReference>
<dbReference type="GO" id="GO:0004048">
    <property type="term" value="F:anthranilate phosphoribosyltransferase activity"/>
    <property type="evidence" value="ECO:0007669"/>
    <property type="project" value="UniProtKB-UniRule"/>
</dbReference>
<dbReference type="GO" id="GO:0000287">
    <property type="term" value="F:magnesium ion binding"/>
    <property type="evidence" value="ECO:0007669"/>
    <property type="project" value="UniProtKB-UniRule"/>
</dbReference>
<dbReference type="GO" id="GO:0000162">
    <property type="term" value="P:L-tryptophan biosynthetic process"/>
    <property type="evidence" value="ECO:0007669"/>
    <property type="project" value="UniProtKB-UniRule"/>
</dbReference>
<dbReference type="FunFam" id="1.20.970.10:FF:000003">
    <property type="entry name" value="Anthranilate phosphoribosyltransferase"/>
    <property type="match status" value="1"/>
</dbReference>
<dbReference type="FunFam" id="3.40.1030.10:FF:000002">
    <property type="entry name" value="Anthranilate phosphoribosyltransferase"/>
    <property type="match status" value="1"/>
</dbReference>
<dbReference type="Gene3D" id="3.40.1030.10">
    <property type="entry name" value="Nucleoside phosphorylase/phosphoribosyltransferase catalytic domain"/>
    <property type="match status" value="1"/>
</dbReference>
<dbReference type="Gene3D" id="1.20.970.10">
    <property type="entry name" value="Transferase, Pyrimidine Nucleoside Phosphorylase, Chain C"/>
    <property type="match status" value="1"/>
</dbReference>
<dbReference type="HAMAP" id="MF_00211">
    <property type="entry name" value="TrpD"/>
    <property type="match status" value="1"/>
</dbReference>
<dbReference type="InterPro" id="IPR005940">
    <property type="entry name" value="Anthranilate_Pribosyl_Tfrase"/>
</dbReference>
<dbReference type="InterPro" id="IPR000312">
    <property type="entry name" value="Glycosyl_Trfase_fam3"/>
</dbReference>
<dbReference type="InterPro" id="IPR017459">
    <property type="entry name" value="Glycosyl_Trfase_fam3_N_dom"/>
</dbReference>
<dbReference type="InterPro" id="IPR036320">
    <property type="entry name" value="Glycosyl_Trfase_fam3_N_dom_sf"/>
</dbReference>
<dbReference type="InterPro" id="IPR035902">
    <property type="entry name" value="Nuc_phospho_transferase"/>
</dbReference>
<dbReference type="NCBIfam" id="TIGR01245">
    <property type="entry name" value="trpD"/>
    <property type="match status" value="1"/>
</dbReference>
<dbReference type="PANTHER" id="PTHR43285">
    <property type="entry name" value="ANTHRANILATE PHOSPHORIBOSYLTRANSFERASE"/>
    <property type="match status" value="1"/>
</dbReference>
<dbReference type="PANTHER" id="PTHR43285:SF2">
    <property type="entry name" value="ANTHRANILATE PHOSPHORIBOSYLTRANSFERASE"/>
    <property type="match status" value="1"/>
</dbReference>
<dbReference type="Pfam" id="PF02885">
    <property type="entry name" value="Glycos_trans_3N"/>
    <property type="match status" value="1"/>
</dbReference>
<dbReference type="Pfam" id="PF00591">
    <property type="entry name" value="Glycos_transf_3"/>
    <property type="match status" value="1"/>
</dbReference>
<dbReference type="SUPFAM" id="SSF52418">
    <property type="entry name" value="Nucleoside phosphorylase/phosphoribosyltransferase catalytic domain"/>
    <property type="match status" value="1"/>
</dbReference>
<dbReference type="SUPFAM" id="SSF47648">
    <property type="entry name" value="Nucleoside phosphorylase/phosphoribosyltransferase N-terminal domain"/>
    <property type="match status" value="1"/>
</dbReference>
<keyword id="KW-0028">Amino-acid biosynthesis</keyword>
<keyword id="KW-0057">Aromatic amino acid biosynthesis</keyword>
<keyword id="KW-0328">Glycosyltransferase</keyword>
<keyword id="KW-0460">Magnesium</keyword>
<keyword id="KW-0479">Metal-binding</keyword>
<keyword id="KW-0808">Transferase</keyword>
<keyword id="KW-0822">Tryptophan biosynthesis</keyword>
<reference key="1">
    <citation type="submission" date="2002-12" db="EMBL/GenBank/DDBJ databases">
        <title>Complete genome sequence of Vibrio vulnificus CMCP6.</title>
        <authorList>
            <person name="Rhee J.H."/>
            <person name="Kim S.Y."/>
            <person name="Chung S.S."/>
            <person name="Kim J.J."/>
            <person name="Moon Y.H."/>
            <person name="Jeong H."/>
            <person name="Choy H.E."/>
        </authorList>
    </citation>
    <scope>NUCLEOTIDE SEQUENCE [LARGE SCALE GENOMIC DNA]</scope>
    <source>
        <strain>CMCP6</strain>
    </source>
</reference>
<comment type="function">
    <text evidence="1">Catalyzes the transfer of the phosphoribosyl group of 5-phosphorylribose-1-pyrophosphate (PRPP) to anthranilate to yield N-(5'-phosphoribosyl)-anthranilate (PRA).</text>
</comment>
<comment type="catalytic activity">
    <reaction evidence="1">
        <text>N-(5-phospho-beta-D-ribosyl)anthranilate + diphosphate = 5-phospho-alpha-D-ribose 1-diphosphate + anthranilate</text>
        <dbReference type="Rhea" id="RHEA:11768"/>
        <dbReference type="ChEBI" id="CHEBI:16567"/>
        <dbReference type="ChEBI" id="CHEBI:18277"/>
        <dbReference type="ChEBI" id="CHEBI:33019"/>
        <dbReference type="ChEBI" id="CHEBI:58017"/>
        <dbReference type="EC" id="2.4.2.18"/>
    </reaction>
</comment>
<comment type="cofactor">
    <cofactor evidence="1">
        <name>Mg(2+)</name>
        <dbReference type="ChEBI" id="CHEBI:18420"/>
    </cofactor>
    <text evidence="1">Binds 2 magnesium ions per monomer.</text>
</comment>
<comment type="pathway">
    <text evidence="1">Amino-acid biosynthesis; L-tryptophan biosynthesis; L-tryptophan from chorismate: step 2/5.</text>
</comment>
<comment type="subunit">
    <text evidence="1">Homodimer.</text>
</comment>
<comment type="similarity">
    <text evidence="1">Belongs to the anthranilate phosphoribosyltransferase family.</text>
</comment>
<sequence length="332" mass="35418">MEAIINKLYQQASLTEQESQQLFDTIIRGELDPILMASALTALKIKGETPDEIAGAAKALLANAQPFPRPDYDFADIVGTGGDGHNTINISTTAAFVAAACGLKVAKHGNRSVSSKSGSSDLLDSFGINLAMSAEDTRSAVDNIGVAFLFAPQYHSGVKHAMPVRQTMKTRTIFNILGPLINPARPNIELMGVYSQELVRPIAETMLKMGMKRAAVVHGSGLDEVAIHGDTLVAEIKDGVIHEYTLTPADFGVNTHPLEAIKGGDPEENKAIITHLLTGKGTEAQLSAVAVNVALLMRLFGHEDLKANTQQAIDVMNSGKAYQLVEKLAQHA</sequence>
<feature type="chain" id="PRO_0000154500" description="Anthranilate phosphoribosyltransferase">
    <location>
        <begin position="1"/>
        <end position="332"/>
    </location>
</feature>
<feature type="binding site" evidence="1">
    <location>
        <position position="79"/>
    </location>
    <ligand>
        <name>5-phospho-alpha-D-ribose 1-diphosphate</name>
        <dbReference type="ChEBI" id="CHEBI:58017"/>
    </ligand>
</feature>
<feature type="binding site" evidence="1">
    <location>
        <position position="79"/>
    </location>
    <ligand>
        <name>anthranilate</name>
        <dbReference type="ChEBI" id="CHEBI:16567"/>
        <label>1</label>
    </ligand>
</feature>
<feature type="binding site" evidence="1">
    <location>
        <begin position="82"/>
        <end position="83"/>
    </location>
    <ligand>
        <name>5-phospho-alpha-D-ribose 1-diphosphate</name>
        <dbReference type="ChEBI" id="CHEBI:58017"/>
    </ligand>
</feature>
<feature type="binding site" evidence="1">
    <location>
        <position position="87"/>
    </location>
    <ligand>
        <name>5-phospho-alpha-D-ribose 1-diphosphate</name>
        <dbReference type="ChEBI" id="CHEBI:58017"/>
    </ligand>
</feature>
<feature type="binding site" evidence="1">
    <location>
        <begin position="89"/>
        <end position="92"/>
    </location>
    <ligand>
        <name>5-phospho-alpha-D-ribose 1-diphosphate</name>
        <dbReference type="ChEBI" id="CHEBI:58017"/>
    </ligand>
</feature>
<feature type="binding site" evidence="1">
    <location>
        <position position="91"/>
    </location>
    <ligand>
        <name>Mg(2+)</name>
        <dbReference type="ChEBI" id="CHEBI:18420"/>
        <label>1</label>
    </ligand>
</feature>
<feature type="binding site" evidence="1">
    <location>
        <begin position="107"/>
        <end position="115"/>
    </location>
    <ligand>
        <name>5-phospho-alpha-D-ribose 1-diphosphate</name>
        <dbReference type="ChEBI" id="CHEBI:58017"/>
    </ligand>
</feature>
<feature type="binding site" evidence="1">
    <location>
        <position position="110"/>
    </location>
    <ligand>
        <name>anthranilate</name>
        <dbReference type="ChEBI" id="CHEBI:16567"/>
        <label>1</label>
    </ligand>
</feature>
<feature type="binding site" evidence="1">
    <location>
        <position position="119"/>
    </location>
    <ligand>
        <name>5-phospho-alpha-D-ribose 1-diphosphate</name>
        <dbReference type="ChEBI" id="CHEBI:58017"/>
    </ligand>
</feature>
<feature type="binding site" evidence="1">
    <location>
        <position position="165"/>
    </location>
    <ligand>
        <name>anthranilate</name>
        <dbReference type="ChEBI" id="CHEBI:16567"/>
        <label>2</label>
    </ligand>
</feature>
<feature type="binding site" evidence="1">
    <location>
        <position position="223"/>
    </location>
    <ligand>
        <name>Mg(2+)</name>
        <dbReference type="ChEBI" id="CHEBI:18420"/>
        <label>2</label>
    </ligand>
</feature>
<feature type="binding site" evidence="1">
    <location>
        <position position="224"/>
    </location>
    <ligand>
        <name>Mg(2+)</name>
        <dbReference type="ChEBI" id="CHEBI:18420"/>
        <label>1</label>
    </ligand>
</feature>
<feature type="binding site" evidence="1">
    <location>
        <position position="224"/>
    </location>
    <ligand>
        <name>Mg(2+)</name>
        <dbReference type="ChEBI" id="CHEBI:18420"/>
        <label>2</label>
    </ligand>
</feature>
<protein>
    <recommendedName>
        <fullName evidence="1">Anthranilate phosphoribosyltransferase</fullName>
        <ecNumber evidence="1">2.4.2.18</ecNumber>
    </recommendedName>
</protein>
<accession>Q8D8B4</accession>
<proteinExistence type="inferred from homology"/>
<organism>
    <name type="scientific">Vibrio vulnificus (strain CMCP6)</name>
    <dbReference type="NCBI Taxonomy" id="216895"/>
    <lineage>
        <taxon>Bacteria</taxon>
        <taxon>Pseudomonadati</taxon>
        <taxon>Pseudomonadota</taxon>
        <taxon>Gammaproteobacteria</taxon>
        <taxon>Vibrionales</taxon>
        <taxon>Vibrionaceae</taxon>
        <taxon>Vibrio</taxon>
    </lineage>
</organism>
<name>TRPD_VIBVU</name>
<gene>
    <name evidence="1" type="primary">trpD</name>
    <name type="ordered locus">VV1_3066</name>
</gene>